<reference key="1">
    <citation type="journal article" date="1988" name="Plant Mol. Biol.">
        <title>Molecular cloning of two isoinhibitor forms of chymotrypsin inhibitor 1 (CI-1) from barley endosperm and their expression in normal and mutant barleys.</title>
        <authorList>
            <person name="Williamson M.S."/>
            <person name="Forde J."/>
            <person name="Kreis M."/>
        </authorList>
        <dbReference type="AGRICOLA" id="IND92000036"/>
    </citation>
    <scope>NUCLEOTIDE SEQUENCE [MRNA]</scope>
</reference>
<reference key="2">
    <citation type="journal article" date="1994" name="Biochim. Biophys. Acta">
        <title>Expression and kinetic characterization of barley chymotrypsin inhibitors 1a and 1b.</title>
        <authorList>
            <person name="Greagg M.A."/>
            <person name="Brauer A.B."/>
            <person name="Leatherbarrow R.J."/>
        </authorList>
    </citation>
    <scope>CHARACTERIZATION</scope>
</reference>
<evidence type="ECO:0000250" key="1"/>
<evidence type="ECO:0000256" key="2">
    <source>
        <dbReference type="SAM" id="MobiDB-lite"/>
    </source>
</evidence>
<evidence type="ECO:0000305" key="3"/>
<protein>
    <recommendedName>
        <fullName>Subtilisin-chymotrypsin inhibitor CI-1B</fullName>
    </recommendedName>
</protein>
<feature type="chain" id="PRO_0000217648" description="Subtilisin-chymotrypsin inhibitor CI-1B">
    <location>
        <begin position="1"/>
        <end position="83"/>
    </location>
</feature>
<feature type="region of interest" description="Disordered" evidence="2">
    <location>
        <begin position="1"/>
        <end position="28"/>
    </location>
</feature>
<feature type="site" description="Reactive bond for subtilisin" evidence="1">
    <location>
        <begin position="34"/>
        <end position="35"/>
    </location>
</feature>
<feature type="site" description="Reactive bond for chymotrypsin and subtilisin">
    <location>
        <begin position="63"/>
        <end position="64"/>
    </location>
</feature>
<proteinExistence type="evidence at protein level"/>
<keyword id="KW-0646">Protease inhibitor</keyword>
<keyword id="KW-0722">Serine protease inhibitor</keyword>
<sequence length="83" mass="8963">MRSMEGSVPKYPEPTEGSIGASGAKRSWPEVVGMSAEKAKEIILRDKPDAQIEVIPVDAMVPLDFNPNRIFILVAVARTPTVG</sequence>
<name>ICIB_HORVU</name>
<comment type="function">
    <text>Inhibits both subtilisin and chymotrypsin.</text>
</comment>
<comment type="similarity">
    <text evidence="3">Belongs to the protease inhibitor I13 (potato type I serine protease inhibitor) family.</text>
</comment>
<accession>P16063</accession>
<organism>
    <name type="scientific">Hordeum vulgare</name>
    <name type="common">Barley</name>
    <dbReference type="NCBI Taxonomy" id="4513"/>
    <lineage>
        <taxon>Eukaryota</taxon>
        <taxon>Viridiplantae</taxon>
        <taxon>Streptophyta</taxon>
        <taxon>Embryophyta</taxon>
        <taxon>Tracheophyta</taxon>
        <taxon>Spermatophyta</taxon>
        <taxon>Magnoliopsida</taxon>
        <taxon>Liliopsida</taxon>
        <taxon>Poales</taxon>
        <taxon>Poaceae</taxon>
        <taxon>BOP clade</taxon>
        <taxon>Pooideae</taxon>
        <taxon>Triticodae</taxon>
        <taxon>Triticeae</taxon>
        <taxon>Hordeinae</taxon>
        <taxon>Hordeum</taxon>
    </lineage>
</organism>
<dbReference type="EMBL" id="M21401">
    <property type="protein sequence ID" value="AAA32946.1"/>
    <property type="molecule type" value="mRNA"/>
</dbReference>
<dbReference type="PIR" id="JA0182">
    <property type="entry name" value="JA0182"/>
</dbReference>
<dbReference type="SMR" id="P16063"/>
<dbReference type="MEROPS" id="I13.005"/>
<dbReference type="ExpressionAtlas" id="P16063">
    <property type="expression patterns" value="baseline"/>
</dbReference>
<dbReference type="GO" id="GO:0004867">
    <property type="term" value="F:serine-type endopeptidase inhibitor activity"/>
    <property type="evidence" value="ECO:0007669"/>
    <property type="project" value="UniProtKB-KW"/>
</dbReference>
<dbReference type="GO" id="GO:0009611">
    <property type="term" value="P:response to wounding"/>
    <property type="evidence" value="ECO:0007669"/>
    <property type="project" value="InterPro"/>
</dbReference>
<dbReference type="Gene3D" id="3.30.10.10">
    <property type="entry name" value="Trypsin Inhibitor V, subunit A"/>
    <property type="match status" value="1"/>
</dbReference>
<dbReference type="InterPro" id="IPR000864">
    <property type="entry name" value="Prot_inh_pot1"/>
</dbReference>
<dbReference type="InterPro" id="IPR036354">
    <property type="entry name" value="Prot_inh_pot1_sf"/>
</dbReference>
<dbReference type="PANTHER" id="PTHR33091">
    <property type="entry name" value="PROTEIN, PUTATIVE, EXPRESSED-RELATED"/>
    <property type="match status" value="1"/>
</dbReference>
<dbReference type="PANTHER" id="PTHR33091:SF46">
    <property type="entry name" value="SUBTILISIN-CHYMOTRYPSIN INHIBITOR-2A"/>
    <property type="match status" value="1"/>
</dbReference>
<dbReference type="Pfam" id="PF00280">
    <property type="entry name" value="potato_inhibit"/>
    <property type="match status" value="1"/>
</dbReference>
<dbReference type="PRINTS" id="PR00292">
    <property type="entry name" value="POTATOINHBTR"/>
</dbReference>
<dbReference type="SUPFAM" id="SSF54654">
    <property type="entry name" value="CI-2 family of serine protease inhibitors"/>
    <property type="match status" value="1"/>
</dbReference>
<dbReference type="PROSITE" id="PS00285">
    <property type="entry name" value="POTATO_INHIBITOR"/>
    <property type="match status" value="1"/>
</dbReference>